<feature type="chain" id="PRO_0000191665" description="Rab3 GTPase-activating protein regulatory subunit">
    <location>
        <begin position="1"/>
        <end position="1307"/>
    </location>
</feature>
<feature type="splice variant" id="VSP_013314" description="In isoform b." evidence="2">
    <original>MSVTPVILEAYCAVSDEVAKQVKKYLLGDFAEES</original>
    <variation>MRLPSRLKSICSEISQKT</variation>
    <location>
        <begin position="1"/>
        <end position="34"/>
    </location>
</feature>
<reference key="1">
    <citation type="journal article" date="1998" name="Science">
        <title>Genome sequence of the nematode C. elegans: a platform for investigating biology.</title>
        <authorList>
            <consortium name="The C. elegans sequencing consortium"/>
        </authorList>
    </citation>
    <scope>NUCLEOTIDE SEQUENCE [LARGE SCALE GENOMIC DNA]</scope>
    <scope>ALTERNATIVE SPLICING</scope>
    <source>
        <strain>Bristol N2</strain>
    </source>
</reference>
<proteinExistence type="inferred from homology"/>
<dbReference type="EMBL" id="Z75550">
    <property type="protein sequence ID" value="CAA99926.1"/>
    <property type="molecule type" value="Genomic_DNA"/>
</dbReference>
<dbReference type="EMBL" id="Z75550">
    <property type="protein sequence ID" value="CAE54924.1"/>
    <property type="molecule type" value="Genomic_DNA"/>
</dbReference>
<dbReference type="PIR" id="T25106">
    <property type="entry name" value="T25106"/>
</dbReference>
<dbReference type="RefSeq" id="NP_001021631.1">
    <molecule id="Q22670-1"/>
    <property type="nucleotide sequence ID" value="NM_001026460.3"/>
</dbReference>
<dbReference type="RefSeq" id="NP_001021632.1">
    <molecule id="Q22670-2"/>
    <property type="nucleotide sequence ID" value="NM_001026461.5"/>
</dbReference>
<dbReference type="BioGRID" id="38010">
    <property type="interactions" value="1"/>
</dbReference>
<dbReference type="FunCoup" id="Q22670">
    <property type="interactions" value="3094"/>
</dbReference>
<dbReference type="STRING" id="6239.T22C1.10a.1"/>
<dbReference type="PaxDb" id="6239-T22C1.10a"/>
<dbReference type="PeptideAtlas" id="Q22670"/>
<dbReference type="EnsemblMetazoa" id="T22C1.10a.1">
    <molecule id="Q22670-1"/>
    <property type="protein sequence ID" value="T22C1.10a.1"/>
    <property type="gene ID" value="WBGene00004318"/>
</dbReference>
<dbReference type="EnsemblMetazoa" id="T22C1.10b.1">
    <molecule id="Q22670-2"/>
    <property type="protein sequence ID" value="T22C1.10b.1"/>
    <property type="gene ID" value="WBGene00004318"/>
</dbReference>
<dbReference type="GeneID" id="172574"/>
<dbReference type="KEGG" id="cel:CELE_T22C1.10"/>
<dbReference type="UCSC" id="T22C1.10b">
    <molecule id="Q22670-1"/>
    <property type="organism name" value="c. elegans"/>
</dbReference>
<dbReference type="AGR" id="WB:WBGene00004318"/>
<dbReference type="CTD" id="172574"/>
<dbReference type="WormBase" id="T22C1.10a">
    <molecule id="Q22670-1"/>
    <property type="protein sequence ID" value="CE06498"/>
    <property type="gene ID" value="WBGene00004318"/>
    <property type="gene designation" value="rbg-2"/>
</dbReference>
<dbReference type="WormBase" id="T22C1.10b">
    <molecule id="Q22670-2"/>
    <property type="protein sequence ID" value="CE36203"/>
    <property type="gene ID" value="WBGene00004318"/>
    <property type="gene designation" value="rbg-2"/>
</dbReference>
<dbReference type="eggNOG" id="KOG2727">
    <property type="taxonomic scope" value="Eukaryota"/>
</dbReference>
<dbReference type="GeneTree" id="ENSGT00390000005794"/>
<dbReference type="HOGENOM" id="CLU_005666_0_0_1"/>
<dbReference type="InParanoid" id="Q22670"/>
<dbReference type="OMA" id="PFRYIYD"/>
<dbReference type="OrthoDB" id="2019917at2759"/>
<dbReference type="PhylomeDB" id="Q22670"/>
<dbReference type="Reactome" id="R-CEL-6811436">
    <property type="pathway name" value="COPI-independent Golgi-to-ER retrograde traffic"/>
</dbReference>
<dbReference type="Reactome" id="R-CEL-8876198">
    <property type="pathway name" value="RAB GEFs exchange GTP for GDP on RABs"/>
</dbReference>
<dbReference type="PRO" id="PR:Q22670"/>
<dbReference type="Proteomes" id="UP000001940">
    <property type="component" value="Chromosome I"/>
</dbReference>
<dbReference type="Bgee" id="WBGene00004318">
    <property type="expression patterns" value="Expressed in adult organism and 4 other cell types or tissues"/>
</dbReference>
<dbReference type="GO" id="GO:0005776">
    <property type="term" value="C:autophagosome"/>
    <property type="evidence" value="ECO:0000318"/>
    <property type="project" value="GO_Central"/>
</dbReference>
<dbReference type="GO" id="GO:0005886">
    <property type="term" value="C:plasma membrane"/>
    <property type="evidence" value="ECO:0000318"/>
    <property type="project" value="GO_Central"/>
</dbReference>
<dbReference type="GO" id="GO:0042734">
    <property type="term" value="C:presynaptic membrane"/>
    <property type="evidence" value="ECO:0000318"/>
    <property type="project" value="GO_Central"/>
</dbReference>
<dbReference type="GO" id="GO:0030234">
    <property type="term" value="F:enzyme regulator activity"/>
    <property type="evidence" value="ECO:0000250"/>
    <property type="project" value="UniProtKB"/>
</dbReference>
<dbReference type="GO" id="GO:0005096">
    <property type="term" value="F:GTPase activator activity"/>
    <property type="evidence" value="ECO:0007669"/>
    <property type="project" value="UniProtKB-KW"/>
</dbReference>
<dbReference type="GO" id="GO:0031267">
    <property type="term" value="F:small GTPase binding"/>
    <property type="evidence" value="ECO:0000318"/>
    <property type="project" value="GO_Central"/>
</dbReference>
<dbReference type="GO" id="GO:0097051">
    <property type="term" value="P:establishment of protein localization to endoplasmic reticulum membrane"/>
    <property type="evidence" value="ECO:0000318"/>
    <property type="project" value="GO_Central"/>
</dbReference>
<dbReference type="GO" id="GO:0016236">
    <property type="term" value="P:macroautophagy"/>
    <property type="evidence" value="ECO:0000318"/>
    <property type="project" value="GO_Central"/>
</dbReference>
<dbReference type="GO" id="GO:0043087">
    <property type="term" value="P:regulation of GTPase activity"/>
    <property type="evidence" value="ECO:0000250"/>
    <property type="project" value="UniProtKB"/>
</dbReference>
<dbReference type="GO" id="GO:0099536">
    <property type="term" value="P:synaptic signaling"/>
    <property type="evidence" value="ECO:0000318"/>
    <property type="project" value="GO_Central"/>
</dbReference>
<dbReference type="InterPro" id="IPR026059">
    <property type="entry name" value="Rab3GAP2"/>
</dbReference>
<dbReference type="InterPro" id="IPR029257">
    <property type="entry name" value="RAB3GAP2_C"/>
</dbReference>
<dbReference type="InterPro" id="IPR032839">
    <property type="entry name" value="RAB3GAP_N"/>
</dbReference>
<dbReference type="PANTHER" id="PTHR12472:SF0">
    <property type="entry name" value="RAB3 GTPASE-ACTIVATING PROTEIN NON-CATALYTIC SUBUNIT"/>
    <property type="match status" value="1"/>
</dbReference>
<dbReference type="PANTHER" id="PTHR12472">
    <property type="entry name" value="RAB3-GAP REGULATORY DOMAIN"/>
    <property type="match status" value="1"/>
</dbReference>
<dbReference type="Pfam" id="PF14656">
    <property type="entry name" value="RAB3GAP2_C"/>
    <property type="match status" value="1"/>
</dbReference>
<dbReference type="Pfam" id="PF14655">
    <property type="entry name" value="RAB3GAP2_N"/>
    <property type="match status" value="1"/>
</dbReference>
<organism>
    <name type="scientific">Caenorhabditis elegans</name>
    <dbReference type="NCBI Taxonomy" id="6239"/>
    <lineage>
        <taxon>Eukaryota</taxon>
        <taxon>Metazoa</taxon>
        <taxon>Ecdysozoa</taxon>
        <taxon>Nematoda</taxon>
        <taxon>Chromadorea</taxon>
        <taxon>Rhabditida</taxon>
        <taxon>Rhabditina</taxon>
        <taxon>Rhabditomorpha</taxon>
        <taxon>Rhabditoidea</taxon>
        <taxon>Rhabditidae</taxon>
        <taxon>Peloderinae</taxon>
        <taxon>Caenorhabditis</taxon>
    </lineage>
</organism>
<evidence type="ECO:0000250" key="1"/>
<evidence type="ECO:0000305" key="2"/>
<accession>Q22670</accession>
<accession>Q7JLF2</accession>
<sequence>MSVTPVILEAYCAVSDEVAKQVKKYLLGDFAEESKFERKNSESSDGSETQFCRATEKKENVEVWDDWGDKEEGAAENSLESDESIRNWLFRCDLKTYSDAEYLLVTWESRFVVLRKPPDEPVYKIVCKQYIEGDPISNEITASSIFGLSNVRHIELLDSIIIALGTLDGHVYFFTEQGTMLYFDRFSIFEPVNSLQFEVVKTGQTFIVVFTKGFFMINPISLKSVLYQAKVLIAKCEKTVKQISESIELQSELLAPDIKGNIIHVIFTGLHKPSTLEQYISASYDSFYAKVEKPSLPLYSTFMVTTEKEFAVFVWHDREEQDKLIDDVIKYGKSLVPSFGIRKFFGISTEPARIASHMRSAVHAPTRSIIMETRVAQNVSRSPDCQYVAVTDRMARVLVIDIASRQVVLIFKGYRDASISWVSVTEDDRVAQFLTIFAPRRSLLEVWTVLGNVRVCAQHVPSSECNVVTGGENKMLCGRCHVHTDSNSFFIDEKGEFHRIALPFHLALTSRSRQDQHDHLLLKQLENTKTGGEDWFQTFSDLKMATSRKTTFQNALHNLSTAEEAHQFIARIRSIPTSASLGDLPNSAEKSIGFYARTVAETKPPVGEYDDKDTSNYKLDSIVERILECHMQKFGERTDMLNDSEVMKVGEWLKYVDLSQEDIDVFSEHWSEKQRHCLANLIFGPLFGSFEIDEYYDTVLEKIPVKRKNIVKLFYMRFEKTTTHIDWRIFNRIVEMFLNLEKSETGILEQVDQMAMDSKDVPLGMILLSICWCARIQIRILKGNDEDEVENDHDLEEEDEKNKTIDEWDAISPEAEHLDCIIMCLHCVSLAQSLLKDDSNILRISDVVPRIDSYIRENVAKWIVSTPIDTDTIEKLFPRDPSENLAEKGNEEDRRKQMIIDFPDDKEVVIQRMYQIIPRVFEHDLVVADVCWEMMSQWFREKDDNFSYIKDCTTLLPQSIVDPRLRHGIARLIWDKFIFMVFQSIVNMVEKTGRRPKDKETRKEIGFGEVKLEEFLMECEKFLEVLMDSVRDMPPPIDFKQDLLVEMASSSFAAHLHQSKTAYRQDQFAILASRQPLVNFHLVLHHQHLALALRLQLTTGLRFHPLRNLFCVTGNRAFFASLDSHPLIPLDRVDDATMEKRHAFLVKVAEQGSMEERRLARHLEMEWKLTVNEISFMQALSSFRLGNDHQGSLELASCVRDDRSAVALARVLAARLIQLANEANKRYSTAHSQYLCALAGEEAARVELYENSPDDPLVDSNPKTWKDAVTSLGRAGNSVPQSAQAAIPFVRMNDIAKLYFGAQWVNN</sequence>
<name>RBGPR_CAEEL</name>
<gene>
    <name type="primary">rbg-2</name>
    <name type="ORF">T22C1.10</name>
</gene>
<protein>
    <recommendedName>
        <fullName>Rab3 GTPase-activating protein regulatory subunit</fullName>
    </recommendedName>
    <alternativeName>
        <fullName>Rab3 GTPase-activating protein 2</fullName>
    </alternativeName>
</protein>
<keyword id="KW-0025">Alternative splicing</keyword>
<keyword id="KW-0963">Cytoplasm</keyword>
<keyword id="KW-0343">GTPase activation</keyword>
<keyword id="KW-1185">Reference proteome</keyword>
<comment type="function">
    <text evidence="1">Probable regulatory subunit of a GTPase activating protein that has specificity for Rab3 subfamily. Rab3 proteins are involved in regulated exocytosis of neurotransmitters and hormones. Rab3 GTPase-activating complex specifically converts active Rab3-GTP to the inactive form Rab3-GDP (By similarity).</text>
</comment>
<comment type="subunit">
    <text evidence="1">The Rab3 GTPase-activating complex is a heterodimer composed of rbg-1 and rbg-2.</text>
</comment>
<comment type="subcellular location">
    <subcellularLocation>
        <location evidence="2">Cytoplasm</location>
    </subcellularLocation>
</comment>
<comment type="alternative products">
    <event type="alternative splicing"/>
    <isoform>
        <id>Q22670-1</id>
        <name>a</name>
        <sequence type="displayed"/>
    </isoform>
    <isoform>
        <id>Q22670-2</id>
        <name>b</name>
        <sequence type="described" ref="VSP_013314"/>
    </isoform>
</comment>
<comment type="similarity">
    <text evidence="2">Belongs to the Rab3-GAP regulatory subunit family.</text>
</comment>